<gene>
    <name evidence="1" type="primary">rpsT</name>
    <name type="ordered locus">HPG27_71</name>
</gene>
<dbReference type="EMBL" id="CP001173">
    <property type="protein sequence ID" value="ACI26842.1"/>
    <property type="molecule type" value="Genomic_DNA"/>
</dbReference>
<dbReference type="RefSeq" id="WP_001273627.1">
    <property type="nucleotide sequence ID" value="NC_011333.1"/>
</dbReference>
<dbReference type="SMR" id="B5Z679"/>
<dbReference type="KEGG" id="hpg:HPG27_71"/>
<dbReference type="HOGENOM" id="CLU_160655_3_0_7"/>
<dbReference type="Proteomes" id="UP000001735">
    <property type="component" value="Chromosome"/>
</dbReference>
<dbReference type="GO" id="GO:0005829">
    <property type="term" value="C:cytosol"/>
    <property type="evidence" value="ECO:0007669"/>
    <property type="project" value="TreeGrafter"/>
</dbReference>
<dbReference type="GO" id="GO:0015935">
    <property type="term" value="C:small ribosomal subunit"/>
    <property type="evidence" value="ECO:0007669"/>
    <property type="project" value="TreeGrafter"/>
</dbReference>
<dbReference type="GO" id="GO:0070181">
    <property type="term" value="F:small ribosomal subunit rRNA binding"/>
    <property type="evidence" value="ECO:0007669"/>
    <property type="project" value="TreeGrafter"/>
</dbReference>
<dbReference type="GO" id="GO:0003735">
    <property type="term" value="F:structural constituent of ribosome"/>
    <property type="evidence" value="ECO:0007669"/>
    <property type="project" value="InterPro"/>
</dbReference>
<dbReference type="GO" id="GO:0006412">
    <property type="term" value="P:translation"/>
    <property type="evidence" value="ECO:0007669"/>
    <property type="project" value="UniProtKB-UniRule"/>
</dbReference>
<dbReference type="FunFam" id="1.20.58.110:FF:000001">
    <property type="entry name" value="30S ribosomal protein S20"/>
    <property type="match status" value="1"/>
</dbReference>
<dbReference type="Gene3D" id="1.20.58.110">
    <property type="entry name" value="Ribosomal protein S20"/>
    <property type="match status" value="1"/>
</dbReference>
<dbReference type="HAMAP" id="MF_00500">
    <property type="entry name" value="Ribosomal_bS20"/>
    <property type="match status" value="1"/>
</dbReference>
<dbReference type="InterPro" id="IPR002583">
    <property type="entry name" value="Ribosomal_bS20"/>
</dbReference>
<dbReference type="InterPro" id="IPR036510">
    <property type="entry name" value="Ribosomal_bS20_sf"/>
</dbReference>
<dbReference type="NCBIfam" id="TIGR00029">
    <property type="entry name" value="S20"/>
    <property type="match status" value="1"/>
</dbReference>
<dbReference type="PANTHER" id="PTHR33398">
    <property type="entry name" value="30S RIBOSOMAL PROTEIN S20"/>
    <property type="match status" value="1"/>
</dbReference>
<dbReference type="PANTHER" id="PTHR33398:SF1">
    <property type="entry name" value="SMALL RIBOSOMAL SUBUNIT PROTEIN BS20C"/>
    <property type="match status" value="1"/>
</dbReference>
<dbReference type="Pfam" id="PF01649">
    <property type="entry name" value="Ribosomal_S20p"/>
    <property type="match status" value="1"/>
</dbReference>
<dbReference type="SUPFAM" id="SSF46992">
    <property type="entry name" value="Ribosomal protein S20"/>
    <property type="match status" value="1"/>
</dbReference>
<comment type="function">
    <text evidence="1">Binds directly to 16S ribosomal RNA.</text>
</comment>
<comment type="similarity">
    <text evidence="1">Belongs to the bacterial ribosomal protein bS20 family.</text>
</comment>
<proteinExistence type="inferred from homology"/>
<protein>
    <recommendedName>
        <fullName evidence="1">Small ribosomal subunit protein bS20</fullName>
    </recommendedName>
    <alternativeName>
        <fullName evidence="2">30S ribosomal protein S20</fullName>
    </alternativeName>
</protein>
<organism>
    <name type="scientific">Helicobacter pylori (strain G27)</name>
    <dbReference type="NCBI Taxonomy" id="563041"/>
    <lineage>
        <taxon>Bacteria</taxon>
        <taxon>Pseudomonadati</taxon>
        <taxon>Campylobacterota</taxon>
        <taxon>Epsilonproteobacteria</taxon>
        <taxon>Campylobacterales</taxon>
        <taxon>Helicobacteraceae</taxon>
        <taxon>Helicobacter</taxon>
    </lineage>
</organism>
<feature type="chain" id="PRO_1000126455" description="Small ribosomal subunit protein bS20">
    <location>
        <begin position="1"/>
        <end position="89"/>
    </location>
</feature>
<name>RS20_HELPG</name>
<sequence>MANHKSAEKRIRQTIKRTERNRFYKTKVKNIIKAVREAVAINDVAKAQERLKIANKELHKFVSKGILKKNTASRKVSRLNASVKKIALA</sequence>
<reference key="1">
    <citation type="journal article" date="2009" name="J. Bacteriol.">
        <title>The complete genome sequence of Helicobacter pylori strain G27.</title>
        <authorList>
            <person name="Baltrus D.A."/>
            <person name="Amieva M.R."/>
            <person name="Covacci A."/>
            <person name="Lowe T.M."/>
            <person name="Merrell D.S."/>
            <person name="Ottemann K.M."/>
            <person name="Stein M."/>
            <person name="Salama N.R."/>
            <person name="Guillemin K."/>
        </authorList>
    </citation>
    <scope>NUCLEOTIDE SEQUENCE [LARGE SCALE GENOMIC DNA]</scope>
    <source>
        <strain>G27</strain>
    </source>
</reference>
<keyword id="KW-1185">Reference proteome</keyword>
<keyword id="KW-0687">Ribonucleoprotein</keyword>
<keyword id="KW-0689">Ribosomal protein</keyword>
<keyword id="KW-0694">RNA-binding</keyword>
<keyword id="KW-0699">rRNA-binding</keyword>
<evidence type="ECO:0000255" key="1">
    <source>
        <dbReference type="HAMAP-Rule" id="MF_00500"/>
    </source>
</evidence>
<evidence type="ECO:0000305" key="2"/>
<accession>B5Z679</accession>